<comment type="function">
    <text evidence="1">Allows the formation of correctly charged Asn-tRNA(Asn) or Gln-tRNA(Gln) through the transamidation of misacylated Asp-tRNA(Asn) or Glu-tRNA(Gln) in organisms which lack either or both of asparaginyl-tRNA or glutaminyl-tRNA synthetases. The reaction takes place in the presence of glutamine and ATP through an activated phospho-Asp-tRNA(Asn) or phospho-Glu-tRNA(Gln).</text>
</comment>
<comment type="catalytic activity">
    <reaction evidence="1">
        <text>L-glutamyl-tRNA(Gln) + L-glutamine + ATP + H2O = L-glutaminyl-tRNA(Gln) + L-glutamate + ADP + phosphate + H(+)</text>
        <dbReference type="Rhea" id="RHEA:17521"/>
        <dbReference type="Rhea" id="RHEA-COMP:9681"/>
        <dbReference type="Rhea" id="RHEA-COMP:9684"/>
        <dbReference type="ChEBI" id="CHEBI:15377"/>
        <dbReference type="ChEBI" id="CHEBI:15378"/>
        <dbReference type="ChEBI" id="CHEBI:29985"/>
        <dbReference type="ChEBI" id="CHEBI:30616"/>
        <dbReference type="ChEBI" id="CHEBI:43474"/>
        <dbReference type="ChEBI" id="CHEBI:58359"/>
        <dbReference type="ChEBI" id="CHEBI:78520"/>
        <dbReference type="ChEBI" id="CHEBI:78521"/>
        <dbReference type="ChEBI" id="CHEBI:456216"/>
    </reaction>
</comment>
<comment type="catalytic activity">
    <reaction evidence="1">
        <text>L-aspartyl-tRNA(Asn) + L-glutamine + ATP + H2O = L-asparaginyl-tRNA(Asn) + L-glutamate + ADP + phosphate + 2 H(+)</text>
        <dbReference type="Rhea" id="RHEA:14513"/>
        <dbReference type="Rhea" id="RHEA-COMP:9674"/>
        <dbReference type="Rhea" id="RHEA-COMP:9677"/>
        <dbReference type="ChEBI" id="CHEBI:15377"/>
        <dbReference type="ChEBI" id="CHEBI:15378"/>
        <dbReference type="ChEBI" id="CHEBI:29985"/>
        <dbReference type="ChEBI" id="CHEBI:30616"/>
        <dbReference type="ChEBI" id="CHEBI:43474"/>
        <dbReference type="ChEBI" id="CHEBI:58359"/>
        <dbReference type="ChEBI" id="CHEBI:78515"/>
        <dbReference type="ChEBI" id="CHEBI:78516"/>
        <dbReference type="ChEBI" id="CHEBI:456216"/>
    </reaction>
</comment>
<comment type="subunit">
    <text evidence="1">Heterotrimer of A, B and C subunits.</text>
</comment>
<comment type="similarity">
    <text evidence="1">Belongs to the GatB/GatE family. GatB subfamily.</text>
</comment>
<accession>Q1MHI9</accession>
<reference key="1">
    <citation type="journal article" date="2006" name="Genome Biol.">
        <title>The genome of Rhizobium leguminosarum has recognizable core and accessory components.</title>
        <authorList>
            <person name="Young J.P.W."/>
            <person name="Crossman L.C."/>
            <person name="Johnston A.W.B."/>
            <person name="Thomson N.R."/>
            <person name="Ghazoui Z.F."/>
            <person name="Hull K.H."/>
            <person name="Wexler M."/>
            <person name="Curson A.R.J."/>
            <person name="Todd J.D."/>
            <person name="Poole P.S."/>
            <person name="Mauchline T.H."/>
            <person name="East A.K."/>
            <person name="Quail M.A."/>
            <person name="Churcher C."/>
            <person name="Arrowsmith C."/>
            <person name="Cherevach I."/>
            <person name="Chillingworth T."/>
            <person name="Clarke K."/>
            <person name="Cronin A."/>
            <person name="Davis P."/>
            <person name="Fraser A."/>
            <person name="Hance Z."/>
            <person name="Hauser H."/>
            <person name="Jagels K."/>
            <person name="Moule S."/>
            <person name="Mungall K."/>
            <person name="Norbertczak H."/>
            <person name="Rabbinowitsch E."/>
            <person name="Sanders M."/>
            <person name="Simmonds M."/>
            <person name="Whitehead S."/>
            <person name="Parkhill J."/>
        </authorList>
    </citation>
    <scope>NUCLEOTIDE SEQUENCE [LARGE SCALE GENOMIC DNA]</scope>
    <source>
        <strain>DSM 114642 / LMG 32736 / 3841</strain>
    </source>
</reference>
<proteinExistence type="inferred from homology"/>
<organism>
    <name type="scientific">Rhizobium johnstonii (strain DSM 114642 / LMG 32736 / 3841)</name>
    <name type="common">Rhizobium leguminosarum bv. viciae</name>
    <dbReference type="NCBI Taxonomy" id="216596"/>
    <lineage>
        <taxon>Bacteria</taxon>
        <taxon>Pseudomonadati</taxon>
        <taxon>Pseudomonadota</taxon>
        <taxon>Alphaproteobacteria</taxon>
        <taxon>Hyphomicrobiales</taxon>
        <taxon>Rhizobiaceae</taxon>
        <taxon>Rhizobium/Agrobacterium group</taxon>
        <taxon>Rhizobium</taxon>
        <taxon>Rhizobium johnstonii</taxon>
    </lineage>
</organism>
<protein>
    <recommendedName>
        <fullName evidence="1">Aspartyl/glutamyl-tRNA(Asn/Gln) amidotransferase subunit B</fullName>
        <shortName evidence="1">Asp/Glu-ADT subunit B</shortName>
        <ecNumber evidence="1">6.3.5.-</ecNumber>
    </recommendedName>
</protein>
<keyword id="KW-0067">ATP-binding</keyword>
<keyword id="KW-0436">Ligase</keyword>
<keyword id="KW-0547">Nucleotide-binding</keyword>
<keyword id="KW-0648">Protein biosynthesis</keyword>
<sequence>MTLVDVRTPDPKRFIPGATGDWEVIVGMEVHAQVLSNSKLFSGASTEFGKPQNSNVSMVDAAMPGMLPVINEECVKQAVRTGLGLKAQINKRSLFDRKNYFYPDLPQGYQISQFKDPIVGEGKIVISLGPDRQGQFEDIEIGIERLHLEQDAGKSMHDQHATMSYVDLNRSGVALMEIVSKPDMRSSDEAKAYMTKLRSIVRYLGTCDGNMDEGSMRADVNVSVRRPGEDFGTRCEIKNVNSIRFIGQAIEYEARRQIGILEDGGKIDQETRLFDPNKGETRSMRSKEDAHDYRYFPDPDLLPLEFDDAFIKALEADLPELPDDKKERFVRELGLSIYDASVLVSEKAIADYFEAVAAGRDGKTAANWVINDLLGALNRTGKDIEQTPVSPAQLGAIIDLIKAGTISGKIAKDLFEIVLAEGGDPAEIVEARGMKQVTDTGAIEKAVDEIIAANPDQVEKVKAKPTMAAWFVGQVMKATGGKANPQAVQALVKAKLGIEE</sequence>
<feature type="chain" id="PRO_1000016028" description="Aspartyl/glutamyl-tRNA(Asn/Gln) amidotransferase subunit B">
    <location>
        <begin position="1"/>
        <end position="500"/>
    </location>
</feature>
<dbReference type="EC" id="6.3.5.-" evidence="1"/>
<dbReference type="EMBL" id="AM236080">
    <property type="protein sequence ID" value="CAK07574.1"/>
    <property type="molecule type" value="Genomic_DNA"/>
</dbReference>
<dbReference type="RefSeq" id="WP_011651687.1">
    <property type="nucleotide sequence ID" value="NC_008380.1"/>
</dbReference>
<dbReference type="SMR" id="Q1MHI9"/>
<dbReference type="EnsemblBacteria" id="CAK07574">
    <property type="protein sequence ID" value="CAK07574"/>
    <property type="gene ID" value="RL2082"/>
</dbReference>
<dbReference type="KEGG" id="rle:RL2082"/>
<dbReference type="eggNOG" id="COG0064">
    <property type="taxonomic scope" value="Bacteria"/>
</dbReference>
<dbReference type="HOGENOM" id="CLU_019240_0_0_5"/>
<dbReference type="Proteomes" id="UP000006575">
    <property type="component" value="Chromosome"/>
</dbReference>
<dbReference type="GO" id="GO:0050566">
    <property type="term" value="F:asparaginyl-tRNA synthase (glutamine-hydrolyzing) activity"/>
    <property type="evidence" value="ECO:0007669"/>
    <property type="project" value="RHEA"/>
</dbReference>
<dbReference type="GO" id="GO:0005524">
    <property type="term" value="F:ATP binding"/>
    <property type="evidence" value="ECO:0007669"/>
    <property type="project" value="UniProtKB-KW"/>
</dbReference>
<dbReference type="GO" id="GO:0050567">
    <property type="term" value="F:glutaminyl-tRNA synthase (glutamine-hydrolyzing) activity"/>
    <property type="evidence" value="ECO:0007669"/>
    <property type="project" value="UniProtKB-UniRule"/>
</dbReference>
<dbReference type="GO" id="GO:0070681">
    <property type="term" value="P:glutaminyl-tRNAGln biosynthesis via transamidation"/>
    <property type="evidence" value="ECO:0007669"/>
    <property type="project" value="TreeGrafter"/>
</dbReference>
<dbReference type="GO" id="GO:0006412">
    <property type="term" value="P:translation"/>
    <property type="evidence" value="ECO:0007669"/>
    <property type="project" value="UniProtKB-UniRule"/>
</dbReference>
<dbReference type="FunFam" id="1.10.10.410:FF:000001">
    <property type="entry name" value="Aspartyl/glutamyl-tRNA(Asn/Gln) amidotransferase subunit B"/>
    <property type="match status" value="1"/>
</dbReference>
<dbReference type="FunFam" id="1.10.150.380:FF:000001">
    <property type="entry name" value="Aspartyl/glutamyl-tRNA(Asn/Gln) amidotransferase subunit B"/>
    <property type="match status" value="1"/>
</dbReference>
<dbReference type="Gene3D" id="1.10.10.410">
    <property type="match status" value="1"/>
</dbReference>
<dbReference type="Gene3D" id="1.10.150.380">
    <property type="entry name" value="GatB domain, N-terminal subdomain"/>
    <property type="match status" value="1"/>
</dbReference>
<dbReference type="HAMAP" id="MF_00121">
    <property type="entry name" value="GatB"/>
    <property type="match status" value="1"/>
</dbReference>
<dbReference type="InterPro" id="IPR017959">
    <property type="entry name" value="Asn/Gln-tRNA_amidoTrfase_suB/E"/>
</dbReference>
<dbReference type="InterPro" id="IPR006075">
    <property type="entry name" value="Asn/Gln-tRNA_Trfase_suB/E_cat"/>
</dbReference>
<dbReference type="InterPro" id="IPR018027">
    <property type="entry name" value="Asn/Gln_amidotransferase"/>
</dbReference>
<dbReference type="InterPro" id="IPR003789">
    <property type="entry name" value="Asn/Gln_tRNA_amidoTrase-B-like"/>
</dbReference>
<dbReference type="InterPro" id="IPR004413">
    <property type="entry name" value="GatB"/>
</dbReference>
<dbReference type="InterPro" id="IPR042114">
    <property type="entry name" value="GatB_C_1"/>
</dbReference>
<dbReference type="InterPro" id="IPR023168">
    <property type="entry name" value="GatB_Yqey_C_2"/>
</dbReference>
<dbReference type="InterPro" id="IPR017958">
    <property type="entry name" value="Gln-tRNA_amidoTrfase_suB_CS"/>
</dbReference>
<dbReference type="InterPro" id="IPR014746">
    <property type="entry name" value="Gln_synth/guanido_kin_cat_dom"/>
</dbReference>
<dbReference type="NCBIfam" id="TIGR00133">
    <property type="entry name" value="gatB"/>
    <property type="match status" value="1"/>
</dbReference>
<dbReference type="NCBIfam" id="NF004012">
    <property type="entry name" value="PRK05477.1-2"/>
    <property type="match status" value="1"/>
</dbReference>
<dbReference type="NCBIfam" id="NF004014">
    <property type="entry name" value="PRK05477.1-4"/>
    <property type="match status" value="1"/>
</dbReference>
<dbReference type="NCBIfam" id="NF004015">
    <property type="entry name" value="PRK05477.1-5"/>
    <property type="match status" value="1"/>
</dbReference>
<dbReference type="PANTHER" id="PTHR11659">
    <property type="entry name" value="GLUTAMYL-TRNA GLN AMIDOTRANSFERASE SUBUNIT B MITOCHONDRIAL AND PROKARYOTIC PET112-RELATED"/>
    <property type="match status" value="1"/>
</dbReference>
<dbReference type="PANTHER" id="PTHR11659:SF0">
    <property type="entry name" value="GLUTAMYL-TRNA(GLN) AMIDOTRANSFERASE SUBUNIT B, MITOCHONDRIAL"/>
    <property type="match status" value="1"/>
</dbReference>
<dbReference type="Pfam" id="PF02934">
    <property type="entry name" value="GatB_N"/>
    <property type="match status" value="1"/>
</dbReference>
<dbReference type="Pfam" id="PF02637">
    <property type="entry name" value="GatB_Yqey"/>
    <property type="match status" value="1"/>
</dbReference>
<dbReference type="SMART" id="SM00845">
    <property type="entry name" value="GatB_Yqey"/>
    <property type="match status" value="1"/>
</dbReference>
<dbReference type="SUPFAM" id="SSF89095">
    <property type="entry name" value="GatB/YqeY motif"/>
    <property type="match status" value="1"/>
</dbReference>
<dbReference type="SUPFAM" id="SSF55931">
    <property type="entry name" value="Glutamine synthetase/guanido kinase"/>
    <property type="match status" value="1"/>
</dbReference>
<dbReference type="PROSITE" id="PS01234">
    <property type="entry name" value="GATB"/>
    <property type="match status" value="1"/>
</dbReference>
<evidence type="ECO:0000255" key="1">
    <source>
        <dbReference type="HAMAP-Rule" id="MF_00121"/>
    </source>
</evidence>
<name>GATB_RHIJ3</name>
<gene>
    <name evidence="1" type="primary">gatB</name>
    <name type="ordered locus">RL2082</name>
</gene>